<protein>
    <recommendedName>
        <fullName evidence="1">Nucleoid-associated protein CTL0589</fullName>
    </recommendedName>
</protein>
<feature type="chain" id="PRO_1000114598" description="Nucleoid-associated protein CTL0589">
    <location>
        <begin position="1"/>
        <end position="96"/>
    </location>
</feature>
<dbReference type="EMBL" id="AM884176">
    <property type="protein sequence ID" value="CAP04029.1"/>
    <property type="molecule type" value="Genomic_DNA"/>
</dbReference>
<dbReference type="RefSeq" id="WP_009871685.1">
    <property type="nucleotide sequence ID" value="NC_010287.1"/>
</dbReference>
<dbReference type="RefSeq" id="YP_001654664.1">
    <property type="nucleotide sequence ID" value="NC_010287.1"/>
</dbReference>
<dbReference type="SMR" id="B0B7Q3"/>
<dbReference type="KEGG" id="ctb:CTL0589"/>
<dbReference type="PATRIC" id="fig|471472.4.peg.634"/>
<dbReference type="HOGENOM" id="CLU_140930_2_2_0"/>
<dbReference type="Proteomes" id="UP001154402">
    <property type="component" value="Chromosome"/>
</dbReference>
<dbReference type="GO" id="GO:0043590">
    <property type="term" value="C:bacterial nucleoid"/>
    <property type="evidence" value="ECO:0007669"/>
    <property type="project" value="UniProtKB-UniRule"/>
</dbReference>
<dbReference type="GO" id="GO:0005829">
    <property type="term" value="C:cytosol"/>
    <property type="evidence" value="ECO:0007669"/>
    <property type="project" value="TreeGrafter"/>
</dbReference>
<dbReference type="GO" id="GO:0003677">
    <property type="term" value="F:DNA binding"/>
    <property type="evidence" value="ECO:0007669"/>
    <property type="project" value="UniProtKB-UniRule"/>
</dbReference>
<dbReference type="FunFam" id="3.30.1310.10:FF:000009">
    <property type="entry name" value="Nucleoid-associated protein TC_0612"/>
    <property type="match status" value="1"/>
</dbReference>
<dbReference type="Gene3D" id="3.30.1310.10">
    <property type="entry name" value="Nucleoid-associated protein YbaB-like domain"/>
    <property type="match status" value="1"/>
</dbReference>
<dbReference type="HAMAP" id="MF_00274">
    <property type="entry name" value="DNA_YbaB_EbfC"/>
    <property type="match status" value="1"/>
</dbReference>
<dbReference type="InterPro" id="IPR036894">
    <property type="entry name" value="YbaB-like_sf"/>
</dbReference>
<dbReference type="InterPro" id="IPR004401">
    <property type="entry name" value="YbaB/EbfC"/>
</dbReference>
<dbReference type="NCBIfam" id="TIGR00103">
    <property type="entry name" value="DNA_YbaB_EbfC"/>
    <property type="match status" value="1"/>
</dbReference>
<dbReference type="PANTHER" id="PTHR33449">
    <property type="entry name" value="NUCLEOID-ASSOCIATED PROTEIN YBAB"/>
    <property type="match status" value="1"/>
</dbReference>
<dbReference type="PANTHER" id="PTHR33449:SF1">
    <property type="entry name" value="NUCLEOID-ASSOCIATED PROTEIN YBAB"/>
    <property type="match status" value="1"/>
</dbReference>
<dbReference type="Pfam" id="PF02575">
    <property type="entry name" value="YbaB_DNA_bd"/>
    <property type="match status" value="1"/>
</dbReference>
<dbReference type="PIRSF" id="PIRSF004555">
    <property type="entry name" value="UCP004555"/>
    <property type="match status" value="1"/>
</dbReference>
<dbReference type="SUPFAM" id="SSF82607">
    <property type="entry name" value="YbaB-like"/>
    <property type="match status" value="1"/>
</dbReference>
<accession>B0B7Q3</accession>
<gene>
    <name type="ordered locus">CTL0589</name>
</gene>
<name>Y589_CHLT2</name>
<organism>
    <name type="scientific">Chlamydia trachomatis serovar L2 (strain ATCC VR-902B / DSM 19102 / 434/Bu)</name>
    <dbReference type="NCBI Taxonomy" id="471472"/>
    <lineage>
        <taxon>Bacteria</taxon>
        <taxon>Pseudomonadati</taxon>
        <taxon>Chlamydiota</taxon>
        <taxon>Chlamydiia</taxon>
        <taxon>Chlamydiales</taxon>
        <taxon>Chlamydiaceae</taxon>
        <taxon>Chlamydia/Chlamydophila group</taxon>
        <taxon>Chlamydia</taxon>
    </lineage>
</organism>
<evidence type="ECO:0000255" key="1">
    <source>
        <dbReference type="HAMAP-Rule" id="MF_00274"/>
    </source>
</evidence>
<sequence length="96" mass="10537">MGSGYAKKKKEAKLMERQFMEMEASLEQKRFSGEAGNGLVSVTINGKCDLVDVRIKPDCLDPEDPEVVADLFRAAFKAAKAALDSEMSAMQMGMPF</sequence>
<proteinExistence type="inferred from homology"/>
<reference key="1">
    <citation type="journal article" date="2008" name="Genome Res.">
        <title>Chlamydia trachomatis: genome sequence analysis of lymphogranuloma venereum isolates.</title>
        <authorList>
            <person name="Thomson N.R."/>
            <person name="Holden M.T.G."/>
            <person name="Carder C."/>
            <person name="Lennard N."/>
            <person name="Lockey S.J."/>
            <person name="Marsh P."/>
            <person name="Skipp P."/>
            <person name="O'Connor C.D."/>
            <person name="Goodhead I."/>
            <person name="Norbertzcak H."/>
            <person name="Harris B."/>
            <person name="Ormond D."/>
            <person name="Rance R."/>
            <person name="Quail M.A."/>
            <person name="Parkhill J."/>
            <person name="Stephens R.S."/>
            <person name="Clarke I.N."/>
        </authorList>
    </citation>
    <scope>NUCLEOTIDE SEQUENCE [LARGE SCALE GENOMIC DNA]</scope>
    <source>
        <strain>ATCC VR-902B / DSM 19102 / 434/Bu</strain>
    </source>
</reference>
<keyword id="KW-0963">Cytoplasm</keyword>
<keyword id="KW-0238">DNA-binding</keyword>
<comment type="function">
    <text evidence="1">Binds to DNA and alters its conformation. May be involved in regulation of gene expression, nucleoid organization and DNA protection.</text>
</comment>
<comment type="subunit">
    <text evidence="1">Homodimer.</text>
</comment>
<comment type="subcellular location">
    <subcellularLocation>
        <location evidence="1">Cytoplasm</location>
        <location evidence="1">Nucleoid</location>
    </subcellularLocation>
</comment>
<comment type="similarity">
    <text evidence="1">Belongs to the YbaB/EbfC family.</text>
</comment>